<dbReference type="EC" id="4.1.1.-" evidence="3"/>
<dbReference type="EMBL" id="AL111168">
    <property type="protein sequence ID" value="CAL35545.1"/>
    <property type="molecule type" value="Genomic_DNA"/>
</dbReference>
<dbReference type="PIR" id="D81289">
    <property type="entry name" value="D81289"/>
</dbReference>
<dbReference type="RefSeq" id="WP_002864382.1">
    <property type="nucleotide sequence ID" value="NZ_SZUC01000003.1"/>
</dbReference>
<dbReference type="RefSeq" id="YP_002344819.1">
    <property type="nucleotide sequence ID" value="NC_002163.1"/>
</dbReference>
<dbReference type="SMR" id="Q0P8H8"/>
<dbReference type="IntAct" id="Q0P8H8">
    <property type="interactions" value="15"/>
</dbReference>
<dbReference type="STRING" id="192222.Cj1436c"/>
<dbReference type="PaxDb" id="192222-Cj1436c"/>
<dbReference type="EnsemblBacteria" id="CAL35545">
    <property type="protein sequence ID" value="CAL35545"/>
    <property type="gene ID" value="Cj1436c"/>
</dbReference>
<dbReference type="GeneID" id="905725"/>
<dbReference type="KEGG" id="cje:Cj1436c"/>
<dbReference type="PATRIC" id="fig|192222.6.peg.1417"/>
<dbReference type="eggNOG" id="COG0079">
    <property type="taxonomic scope" value="Bacteria"/>
</dbReference>
<dbReference type="HOGENOM" id="CLU_017584_3_2_7"/>
<dbReference type="OrthoDB" id="5362312at2"/>
<dbReference type="STRENDA-DB" id="YZGXDR">
    <property type="experiment" value="Membrane Inlet Mass Spectrometry (MIMS) for the Determination of the Kinetic Constants for Cj1436"/>
</dbReference>
<dbReference type="UniPathway" id="UPA00934"/>
<dbReference type="Proteomes" id="UP000000799">
    <property type="component" value="Chromosome"/>
</dbReference>
<dbReference type="GO" id="GO:0016831">
    <property type="term" value="F:carboxy-lyase activity"/>
    <property type="evidence" value="ECO:0000314"/>
    <property type="project" value="UniProtKB"/>
</dbReference>
<dbReference type="GO" id="GO:0030170">
    <property type="term" value="F:pyridoxal phosphate binding"/>
    <property type="evidence" value="ECO:0000314"/>
    <property type="project" value="UniProtKB"/>
</dbReference>
<dbReference type="GO" id="GO:0045227">
    <property type="term" value="P:capsule polysaccharide biosynthetic process"/>
    <property type="evidence" value="ECO:0000314"/>
    <property type="project" value="UniProtKB"/>
</dbReference>
<dbReference type="CDD" id="cd00609">
    <property type="entry name" value="AAT_like"/>
    <property type="match status" value="1"/>
</dbReference>
<dbReference type="Gene3D" id="3.90.1150.10">
    <property type="entry name" value="Aspartate Aminotransferase, domain 1"/>
    <property type="match status" value="1"/>
</dbReference>
<dbReference type="Gene3D" id="3.40.640.10">
    <property type="entry name" value="Type I PLP-dependent aspartate aminotransferase-like (Major domain)"/>
    <property type="match status" value="1"/>
</dbReference>
<dbReference type="InterPro" id="IPR004839">
    <property type="entry name" value="Aminotransferase_I/II_large"/>
</dbReference>
<dbReference type="InterPro" id="IPR004838">
    <property type="entry name" value="NHTrfase_class1_PyrdxlP-BS"/>
</dbReference>
<dbReference type="InterPro" id="IPR015424">
    <property type="entry name" value="PyrdxlP-dep_Trfase"/>
</dbReference>
<dbReference type="InterPro" id="IPR015421">
    <property type="entry name" value="PyrdxlP-dep_Trfase_major"/>
</dbReference>
<dbReference type="InterPro" id="IPR015422">
    <property type="entry name" value="PyrdxlP-dep_Trfase_small"/>
</dbReference>
<dbReference type="PANTHER" id="PTHR42885">
    <property type="entry name" value="HISTIDINOL-PHOSPHATE AMINOTRANSFERASE-RELATED"/>
    <property type="match status" value="1"/>
</dbReference>
<dbReference type="PANTHER" id="PTHR42885:SF1">
    <property type="entry name" value="THREONINE-PHOSPHATE DECARBOXYLASE"/>
    <property type="match status" value="1"/>
</dbReference>
<dbReference type="Pfam" id="PF00155">
    <property type="entry name" value="Aminotran_1_2"/>
    <property type="match status" value="1"/>
</dbReference>
<dbReference type="SUPFAM" id="SSF53383">
    <property type="entry name" value="PLP-dependent transferases"/>
    <property type="match status" value="1"/>
</dbReference>
<dbReference type="PROSITE" id="PS00105">
    <property type="entry name" value="AA_TRANSFER_CLASS_1"/>
    <property type="match status" value="1"/>
</dbReference>
<gene>
    <name evidence="6" type="ordered locus">Cj1436c</name>
</gene>
<evidence type="ECO:0000250" key="1">
    <source>
        <dbReference type="UniProtKB" id="Q9X0D0"/>
    </source>
</evidence>
<evidence type="ECO:0000255" key="2">
    <source>
        <dbReference type="RuleBase" id="RU000481"/>
    </source>
</evidence>
<evidence type="ECO:0000269" key="3">
    <source>
    </source>
</evidence>
<evidence type="ECO:0000303" key="4">
    <source>
    </source>
</evidence>
<evidence type="ECO:0000305" key="5">
    <source>
    </source>
</evidence>
<evidence type="ECO:0000312" key="6">
    <source>
        <dbReference type="EMBL" id="CAL35545.1"/>
    </source>
</evidence>
<evidence type="ECO:0000312" key="7">
    <source>
        <dbReference type="Proteomes" id="UP000000799"/>
    </source>
</evidence>
<comment type="function">
    <text evidence="3">Pyridoxal phosphate (PLP)-dependent decarboxylase involved in the biosynthesis of amidated D-glucuronic acid structures found on the capsular polysaccharide (CPS) of C.jejuni. Catalyzes the decarboxylation of L-serine phosphate to ethanolamine phosphate. Less active with L-threonine phosphate. No activity with L-serine, L-threonine, L-aspartate or L-glutamate.</text>
</comment>
<comment type="catalytic activity">
    <reaction evidence="3">
        <text>O-phospho-L-serine + H(+) = phosphoethanolamine + CO2</text>
        <dbReference type="Rhea" id="RHEA:69548"/>
        <dbReference type="ChEBI" id="CHEBI:15378"/>
        <dbReference type="ChEBI" id="CHEBI:16526"/>
        <dbReference type="ChEBI" id="CHEBI:57524"/>
        <dbReference type="ChEBI" id="CHEBI:58190"/>
    </reaction>
</comment>
<comment type="cofactor">
    <cofactor evidence="2 3">
        <name>pyridoxal 5'-phosphate</name>
        <dbReference type="ChEBI" id="CHEBI:597326"/>
    </cofactor>
</comment>
<comment type="biophysicochemical properties">
    <kinetics>
        <KM evidence="3">0.6 mM for L-serine phosphate (at pH 8.0)</KM>
        <text evidence="3">kcat is 0.21 sec(-1) with L-serine phosphate as substrate.</text>
    </kinetics>
</comment>
<comment type="pathway">
    <text evidence="5">Capsule biogenesis; capsule polysaccharide biosynthesis.</text>
</comment>
<comment type="similarity">
    <text evidence="2">Belongs to the class-I pyridoxal-phosphate-dependent aminotransferase family.</text>
</comment>
<reference evidence="6 7" key="1">
    <citation type="journal article" date="2000" name="Nature">
        <title>The genome sequence of the food-borne pathogen Campylobacter jejuni reveals hypervariable sequences.</title>
        <authorList>
            <person name="Parkhill J."/>
            <person name="Wren B.W."/>
            <person name="Mungall K.L."/>
            <person name="Ketley J.M."/>
            <person name="Churcher C.M."/>
            <person name="Basham D."/>
            <person name="Chillingworth T."/>
            <person name="Davies R.M."/>
            <person name="Feltwell T."/>
            <person name="Holroyd S."/>
            <person name="Jagels K."/>
            <person name="Karlyshev A.V."/>
            <person name="Moule S."/>
            <person name="Pallen M.J."/>
            <person name="Penn C.W."/>
            <person name="Quail M.A."/>
            <person name="Rajandream M.A."/>
            <person name="Rutherford K.M."/>
            <person name="van Vliet A.H.M."/>
            <person name="Whitehead S."/>
            <person name="Barrell B.G."/>
        </authorList>
    </citation>
    <scope>NUCLEOTIDE SEQUENCE [LARGE SCALE GENOMIC DNA]</scope>
    <source>
        <strain evidence="7">ATCC 700819 / NCTC 11168</strain>
    </source>
</reference>
<reference key="2">
    <citation type="journal article" date="2021" name="Biochemistry">
        <title>Functional Characterization of Two PLP-Dependent Enzymes Involved in Capsular Polysaccharide Biosynthesis from Campylobacter jejuni.</title>
        <authorList>
            <person name="Riegert A.S."/>
            <person name="Narindoshvili T."/>
            <person name="Coricello A."/>
            <person name="Richards N.G.J."/>
            <person name="Raushel F.M."/>
        </authorList>
    </citation>
    <scope>FUNCTION</scope>
    <scope>CATALYTIC ACTIVITY</scope>
    <scope>SUBSTRATE SPECIFICITY</scope>
    <scope>COFACTOR</scope>
    <scope>BIOPHYSICOCHEMICAL PROPERTIES</scope>
    <scope>PATHWAY</scope>
    <source>
        <strain evidence="4">ATCC 700819 / NCTC 11168</strain>
    </source>
</reference>
<feature type="chain" id="PRO_0000455116" description="L-serine phosphate decarboxylase Cj1436c">
    <location>
        <begin position="1"/>
        <end position="390"/>
    </location>
</feature>
<feature type="modified residue" description="N6-(pyridoxal phosphate)lysine" evidence="1">
    <location>
        <position position="243"/>
    </location>
</feature>
<protein>
    <recommendedName>
        <fullName evidence="5">L-serine phosphate decarboxylase Cj1436c</fullName>
        <ecNumber evidence="3">4.1.1.-</ecNumber>
    </recommendedName>
    <alternativeName>
        <fullName evidence="5">Capsule polysaccharide biosynthesis protein Cj1436c</fullName>
    </alternativeName>
    <alternativeName>
        <fullName evidence="4">PLP-dependent decarboxylase Cj1436</fullName>
    </alternativeName>
</protein>
<keyword id="KW-0972">Capsule biogenesis/degradation</keyword>
<keyword id="KW-0210">Decarboxylase</keyword>
<keyword id="KW-0456">Lyase</keyword>
<keyword id="KW-0663">Pyridoxal phosphate</keyword>
<keyword id="KW-1185">Reference proteome</keyword>
<name>C1436_CAMJE</name>
<accession>Q0P8H8</accession>
<proteinExistence type="evidence at protein level"/>
<sequence>MLIKLNDYEKNITQKIKDLKNASGSHSPSIFTMAEQIPELNIKIDSCFLSNPYATALFLRYLKEELIDGQKLRSVLEFYPSQNSIIAKTVADFIGIDPKNVFIGNGAIEIIQAVMHNFVGKKIIVNIPTFSSYYEFAKSETNVVYYQLSKEDNYNLNIEHYLNFVKNENPDSVVLINPNNPDGGYINYEKLRYILSELKYVKNIIIDESFIHFAYENKDYNGINIEYLFKEFHNTIIIKSMSKDFGVAGIRIGYAIMSEDKIRGLLKNGYLWNSSGLSEYFLRLYVRKNFFDEYDKVRREYIQETQTFFRKLSGIKQFKVYPSMANFALVELLDGSSSTDFVAKMLIKYGIYMRTCNDKIGLEGEFIRIASRTLEENDMVLKSICDVFKE</sequence>
<organism evidence="7">
    <name type="scientific">Campylobacter jejuni subsp. jejuni serotype O:2 (strain ATCC 700819 / NCTC 11168)</name>
    <dbReference type="NCBI Taxonomy" id="192222"/>
    <lineage>
        <taxon>Bacteria</taxon>
        <taxon>Pseudomonadati</taxon>
        <taxon>Campylobacterota</taxon>
        <taxon>Epsilonproteobacteria</taxon>
        <taxon>Campylobacterales</taxon>
        <taxon>Campylobacteraceae</taxon>
        <taxon>Campylobacter</taxon>
    </lineage>
</organism>